<accession>P64067</accession>
<accession>G0KE30</accession>
<accession>Q8FV28</accession>
<accession>Q8YDA4</accession>
<gene>
    <name evidence="1" type="primary">engB</name>
    <name type="ordered locus">BRA1024</name>
    <name type="ordered locus">BS1330_II1016</name>
</gene>
<feature type="chain" id="PRO_0000157738" description="Probable GTP-binding protein EngB">
    <location>
        <begin position="1"/>
        <end position="241"/>
    </location>
</feature>
<feature type="domain" description="EngB-type G" evidence="1">
    <location>
        <begin position="56"/>
        <end position="240"/>
    </location>
</feature>
<feature type="binding site" evidence="1">
    <location>
        <begin position="64"/>
        <end position="71"/>
    </location>
    <ligand>
        <name>GTP</name>
        <dbReference type="ChEBI" id="CHEBI:37565"/>
    </ligand>
</feature>
<feature type="binding site" evidence="1">
    <location>
        <position position="71"/>
    </location>
    <ligand>
        <name>Mg(2+)</name>
        <dbReference type="ChEBI" id="CHEBI:18420"/>
    </ligand>
</feature>
<feature type="binding site" evidence="1">
    <location>
        <begin position="91"/>
        <end position="95"/>
    </location>
    <ligand>
        <name>GTP</name>
        <dbReference type="ChEBI" id="CHEBI:37565"/>
    </ligand>
</feature>
<feature type="binding site" evidence="1">
    <location>
        <position position="93"/>
    </location>
    <ligand>
        <name>Mg(2+)</name>
        <dbReference type="ChEBI" id="CHEBI:18420"/>
    </ligand>
</feature>
<feature type="binding site" evidence="1">
    <location>
        <begin position="118"/>
        <end position="121"/>
    </location>
    <ligand>
        <name>GTP</name>
        <dbReference type="ChEBI" id="CHEBI:37565"/>
    </ligand>
</feature>
<feature type="binding site" evidence="1">
    <location>
        <begin position="185"/>
        <end position="188"/>
    </location>
    <ligand>
        <name>GTP</name>
        <dbReference type="ChEBI" id="CHEBI:37565"/>
    </ligand>
</feature>
<feature type="binding site" evidence="1">
    <location>
        <begin position="219"/>
        <end position="221"/>
    </location>
    <ligand>
        <name>GTP</name>
        <dbReference type="ChEBI" id="CHEBI:37565"/>
    </ligand>
</feature>
<sequence length="241" mass="26254">MSEQDKKQAAIKAAQAAADAVREAQAALAEEGRLLFKKSWIFIRGVPSMKFLPPEGPVEIAFAGRSNVGKSSLINALVGKKGLARTSNTPGRTQELNYFVPDGYSGENGDLPPLALVDMPGYGFAEAPKAQVDAWTRLVFDYLRGRTTLKRVYVLIDARHGIKKNDAEVLDLLDKAAVSYQIVLTKIDKIKPAGVPRLLEETHKLTYKRAACFPGIIATSSEKGQGLDDLRAAIALLLKEY</sequence>
<proteinExistence type="inferred from homology"/>
<name>ENGB_BRUSU</name>
<comment type="function">
    <text evidence="1">Necessary for normal cell division and for the maintenance of normal septation.</text>
</comment>
<comment type="cofactor">
    <cofactor evidence="1">
        <name>Mg(2+)</name>
        <dbReference type="ChEBI" id="CHEBI:18420"/>
    </cofactor>
</comment>
<comment type="similarity">
    <text evidence="1">Belongs to the TRAFAC class TrmE-Era-EngA-EngB-Septin-like GTPase superfamily. EngB GTPase family.</text>
</comment>
<comment type="sequence caution" evidence="2">
    <conflict type="erroneous initiation">
        <sequence resource="EMBL-CDS" id="AAN34192"/>
    </conflict>
</comment>
<comment type="sequence caution" evidence="2">
    <conflict type="erroneous initiation">
        <sequence resource="EMBL-CDS" id="AEM20468"/>
    </conflict>
    <text>Extended N-terminus.</text>
</comment>
<organism>
    <name type="scientific">Brucella suis biovar 1 (strain 1330)</name>
    <dbReference type="NCBI Taxonomy" id="204722"/>
    <lineage>
        <taxon>Bacteria</taxon>
        <taxon>Pseudomonadati</taxon>
        <taxon>Pseudomonadota</taxon>
        <taxon>Alphaproteobacteria</taxon>
        <taxon>Hyphomicrobiales</taxon>
        <taxon>Brucellaceae</taxon>
        <taxon>Brucella/Ochrobactrum group</taxon>
        <taxon>Brucella</taxon>
    </lineage>
</organism>
<evidence type="ECO:0000255" key="1">
    <source>
        <dbReference type="HAMAP-Rule" id="MF_00321"/>
    </source>
</evidence>
<evidence type="ECO:0000305" key="2"/>
<keyword id="KW-0131">Cell cycle</keyword>
<keyword id="KW-0132">Cell division</keyword>
<keyword id="KW-0342">GTP-binding</keyword>
<keyword id="KW-0460">Magnesium</keyword>
<keyword id="KW-0479">Metal-binding</keyword>
<keyword id="KW-0547">Nucleotide-binding</keyword>
<keyword id="KW-0717">Septation</keyword>
<protein>
    <recommendedName>
        <fullName evidence="1">Probable GTP-binding protein EngB</fullName>
    </recommendedName>
</protein>
<dbReference type="EMBL" id="AE014292">
    <property type="protein sequence ID" value="AAN34192.1"/>
    <property type="status" value="ALT_INIT"/>
    <property type="molecule type" value="Genomic_DNA"/>
</dbReference>
<dbReference type="EMBL" id="CP002998">
    <property type="protein sequence ID" value="AEM20468.1"/>
    <property type="status" value="ALT_INIT"/>
    <property type="molecule type" value="Genomic_DNA"/>
</dbReference>
<dbReference type="SMR" id="P64067"/>
<dbReference type="KEGG" id="bms:BRA1024"/>
<dbReference type="KEGG" id="bsi:BS1330_II1016"/>
<dbReference type="PATRIC" id="fig|204722.22.peg.2618"/>
<dbReference type="HOGENOM" id="CLU_033732_2_0_5"/>
<dbReference type="PhylomeDB" id="P64067"/>
<dbReference type="Proteomes" id="UP000007104">
    <property type="component" value="Chromosome II"/>
</dbReference>
<dbReference type="GO" id="GO:0005829">
    <property type="term" value="C:cytosol"/>
    <property type="evidence" value="ECO:0007669"/>
    <property type="project" value="TreeGrafter"/>
</dbReference>
<dbReference type="GO" id="GO:0005525">
    <property type="term" value="F:GTP binding"/>
    <property type="evidence" value="ECO:0007669"/>
    <property type="project" value="UniProtKB-UniRule"/>
</dbReference>
<dbReference type="GO" id="GO:0046872">
    <property type="term" value="F:metal ion binding"/>
    <property type="evidence" value="ECO:0007669"/>
    <property type="project" value="UniProtKB-KW"/>
</dbReference>
<dbReference type="GO" id="GO:0000917">
    <property type="term" value="P:division septum assembly"/>
    <property type="evidence" value="ECO:0007669"/>
    <property type="project" value="UniProtKB-KW"/>
</dbReference>
<dbReference type="CDD" id="cd01876">
    <property type="entry name" value="YihA_EngB"/>
    <property type="match status" value="1"/>
</dbReference>
<dbReference type="Gene3D" id="3.40.50.300">
    <property type="entry name" value="P-loop containing nucleotide triphosphate hydrolases"/>
    <property type="match status" value="1"/>
</dbReference>
<dbReference type="HAMAP" id="MF_00321">
    <property type="entry name" value="GTPase_EngB"/>
    <property type="match status" value="1"/>
</dbReference>
<dbReference type="InterPro" id="IPR030393">
    <property type="entry name" value="G_ENGB_dom"/>
</dbReference>
<dbReference type="InterPro" id="IPR006073">
    <property type="entry name" value="GTP-bd"/>
</dbReference>
<dbReference type="InterPro" id="IPR019987">
    <property type="entry name" value="GTP-bd_ribosome_bio_YsxC"/>
</dbReference>
<dbReference type="InterPro" id="IPR027417">
    <property type="entry name" value="P-loop_NTPase"/>
</dbReference>
<dbReference type="NCBIfam" id="TIGR03598">
    <property type="entry name" value="GTPase_YsxC"/>
    <property type="match status" value="1"/>
</dbReference>
<dbReference type="PANTHER" id="PTHR11649:SF13">
    <property type="entry name" value="ENGB-TYPE G DOMAIN-CONTAINING PROTEIN"/>
    <property type="match status" value="1"/>
</dbReference>
<dbReference type="PANTHER" id="PTHR11649">
    <property type="entry name" value="MSS1/TRME-RELATED GTP-BINDING PROTEIN"/>
    <property type="match status" value="1"/>
</dbReference>
<dbReference type="Pfam" id="PF01926">
    <property type="entry name" value="MMR_HSR1"/>
    <property type="match status" value="1"/>
</dbReference>
<dbReference type="SUPFAM" id="SSF52540">
    <property type="entry name" value="P-loop containing nucleoside triphosphate hydrolases"/>
    <property type="match status" value="1"/>
</dbReference>
<dbReference type="PROSITE" id="PS51706">
    <property type="entry name" value="G_ENGB"/>
    <property type="match status" value="1"/>
</dbReference>
<reference key="1">
    <citation type="journal article" date="2002" name="Proc. Natl. Acad. Sci. U.S.A.">
        <title>The Brucella suis genome reveals fundamental similarities between animal and plant pathogens and symbionts.</title>
        <authorList>
            <person name="Paulsen I.T."/>
            <person name="Seshadri R."/>
            <person name="Nelson K.E."/>
            <person name="Eisen J.A."/>
            <person name="Heidelberg J.F."/>
            <person name="Read T.D."/>
            <person name="Dodson R.J."/>
            <person name="Umayam L.A."/>
            <person name="Brinkac L.M."/>
            <person name="Beanan M.J."/>
            <person name="Daugherty S.C."/>
            <person name="DeBoy R.T."/>
            <person name="Durkin A.S."/>
            <person name="Kolonay J.F."/>
            <person name="Madupu R."/>
            <person name="Nelson W.C."/>
            <person name="Ayodeji B."/>
            <person name="Kraul M."/>
            <person name="Shetty J."/>
            <person name="Malek J.A."/>
            <person name="Van Aken S.E."/>
            <person name="Riedmuller S."/>
            <person name="Tettelin H."/>
            <person name="Gill S.R."/>
            <person name="White O."/>
            <person name="Salzberg S.L."/>
            <person name="Hoover D.L."/>
            <person name="Lindler L.E."/>
            <person name="Halling S.M."/>
            <person name="Boyle S.M."/>
            <person name="Fraser C.M."/>
        </authorList>
    </citation>
    <scope>NUCLEOTIDE SEQUENCE [LARGE SCALE GENOMIC DNA]</scope>
    <source>
        <strain>1330</strain>
    </source>
</reference>
<reference key="2">
    <citation type="journal article" date="2011" name="J. Bacteriol.">
        <title>Revised genome sequence of Brucella suis 1330.</title>
        <authorList>
            <person name="Tae H."/>
            <person name="Shallom S."/>
            <person name="Settlage R."/>
            <person name="Preston D."/>
            <person name="Adams L.G."/>
            <person name="Garner H.R."/>
        </authorList>
    </citation>
    <scope>NUCLEOTIDE SEQUENCE [LARGE SCALE GENOMIC DNA]</scope>
    <source>
        <strain>1330</strain>
    </source>
</reference>